<gene>
    <name type="primary">MEP3</name>
</gene>
<dbReference type="EC" id="3.4.24.-"/>
<dbReference type="EMBL" id="AY283574">
    <property type="protein sequence ID" value="AAQ21099.1"/>
    <property type="molecule type" value="Genomic_DNA"/>
</dbReference>
<dbReference type="SMR" id="Q6WIH3"/>
<dbReference type="MEROPS" id="M36.001"/>
<dbReference type="GlyCosmos" id="Q6WIH3">
    <property type="glycosylation" value="3 sites, No reported glycans"/>
</dbReference>
<dbReference type="PHI-base" id="PHI:4972"/>
<dbReference type="GO" id="GO:0005576">
    <property type="term" value="C:extracellular region"/>
    <property type="evidence" value="ECO:0007669"/>
    <property type="project" value="UniProtKB-SubCell"/>
</dbReference>
<dbReference type="GO" id="GO:0004222">
    <property type="term" value="F:metalloendopeptidase activity"/>
    <property type="evidence" value="ECO:0007669"/>
    <property type="project" value="InterPro"/>
</dbReference>
<dbReference type="GO" id="GO:0008270">
    <property type="term" value="F:zinc ion binding"/>
    <property type="evidence" value="ECO:0007669"/>
    <property type="project" value="InterPro"/>
</dbReference>
<dbReference type="GO" id="GO:0006508">
    <property type="term" value="P:proteolysis"/>
    <property type="evidence" value="ECO:0007669"/>
    <property type="project" value="UniProtKB-KW"/>
</dbReference>
<dbReference type="CDD" id="cd09596">
    <property type="entry name" value="M36"/>
    <property type="match status" value="1"/>
</dbReference>
<dbReference type="Gene3D" id="3.10.170.10">
    <property type="match status" value="1"/>
</dbReference>
<dbReference type="Gene3D" id="1.10.390.10">
    <property type="entry name" value="Neutral Protease Domain 2"/>
    <property type="match status" value="1"/>
</dbReference>
<dbReference type="InterPro" id="IPR011096">
    <property type="entry name" value="FTP_domain"/>
</dbReference>
<dbReference type="InterPro" id="IPR050371">
    <property type="entry name" value="Fungal_virulence_M36"/>
</dbReference>
<dbReference type="InterPro" id="IPR001842">
    <property type="entry name" value="Peptidase_M36"/>
</dbReference>
<dbReference type="InterPro" id="IPR027268">
    <property type="entry name" value="Peptidase_M4/M1_CTD_sf"/>
</dbReference>
<dbReference type="PANTHER" id="PTHR33478">
    <property type="entry name" value="EXTRACELLULAR METALLOPROTEINASE MEP"/>
    <property type="match status" value="1"/>
</dbReference>
<dbReference type="PANTHER" id="PTHR33478:SF1">
    <property type="entry name" value="EXTRACELLULAR METALLOPROTEINASE MEP"/>
    <property type="match status" value="1"/>
</dbReference>
<dbReference type="Pfam" id="PF07504">
    <property type="entry name" value="FTP"/>
    <property type="match status" value="1"/>
</dbReference>
<dbReference type="Pfam" id="PF02128">
    <property type="entry name" value="Peptidase_M36"/>
    <property type="match status" value="1"/>
</dbReference>
<dbReference type="PRINTS" id="PR00999">
    <property type="entry name" value="FUNGALYSIN"/>
</dbReference>
<dbReference type="SUPFAM" id="SSF55486">
    <property type="entry name" value="Metalloproteases ('zincins'), catalytic domain"/>
    <property type="match status" value="1"/>
</dbReference>
<dbReference type="PROSITE" id="PS00142">
    <property type="entry name" value="ZINC_PROTEASE"/>
    <property type="match status" value="1"/>
</dbReference>
<protein>
    <recommendedName>
        <fullName>Extracellular metalloproteinase 3</fullName>
        <ecNumber>3.4.24.-</ecNumber>
    </recommendedName>
    <alternativeName>
        <fullName>Fungalysin MEP3</fullName>
    </alternativeName>
</protein>
<keyword id="KW-0325">Glycoprotein</keyword>
<keyword id="KW-0378">Hydrolase</keyword>
<keyword id="KW-0479">Metal-binding</keyword>
<keyword id="KW-0482">Metalloprotease</keyword>
<keyword id="KW-0645">Protease</keyword>
<keyword id="KW-0964">Secreted</keyword>
<keyword id="KW-0732">Signal</keyword>
<keyword id="KW-0843">Virulence</keyword>
<keyword id="KW-0862">Zinc</keyword>
<keyword id="KW-0865">Zymogen</keyword>
<evidence type="ECO:0000250" key="1"/>
<evidence type="ECO:0000255" key="2"/>
<evidence type="ECO:0000255" key="3">
    <source>
        <dbReference type="PROSITE-ProRule" id="PRU10095"/>
    </source>
</evidence>
<evidence type="ECO:0000269" key="4">
    <source>
    </source>
</evidence>
<evidence type="ECO:0000305" key="5"/>
<reference key="1">
    <citation type="journal article" date="2004" name="Microbiology">
        <title>Multiplication of an ancestral gene encoding secreted fungalysin preceded species differentiation in the dermatophytes Trichophyton and Microsporum.</title>
        <authorList>
            <person name="Jousson O."/>
            <person name="Lechenne B."/>
            <person name="Bontems O."/>
            <person name="Capoccia S."/>
            <person name="Mignon B."/>
            <person name="Barblan J."/>
            <person name="Quadroni M."/>
            <person name="Monod M."/>
        </authorList>
    </citation>
    <scope>NUCLEOTIDE SEQUENCE [GENOMIC DNA]</scope>
    <scope>IDENTIFICATION BY MASS SPECTROMETRY</scope>
    <scope>SUBCELLULAR LOCATION</scope>
</reference>
<sequence length="633" mass="69320">MHGLLLAGLLALPMNVLAHPAEQHASNVLSRRGVDIESFRLPLKAKYMDSDAAAQKIQAMSFSKDDDYVSTATKLVKSTFPKSTFRVVDDHYIGTNGIGHVHFKQTAHGLDIDNSDFNVNIGRDGKVFSFGNSFFTGEIPKENPMVKRAFSDPVKALKGAVKALNLPVKSDNAKAKTTAGKESFEFMGTTGALSAPKANLVYLQKEDGTLALTWRVETDVGDNWLLTYVDAHNSETVHNVVDYVASAEFKVFAWGLNDPTEGNPTSIRDPWTDSSPYTWHSDGMTKYPTTRGNNAIAQDNPTGGSTYINNYRPQSPNLIFNYPWSPTATPPSSYKDFSITQLFYTTNRFHDLLYSFGFNEAAGNFQVNNGNKGGRGNDFAIVNAQDGSGTNNANFATPPDGSPGRMRMYNWTTARPNRDGCLEAGIVIHEYAHGLSNRLCGGPANSGCLNALESGGMGEGWGDFYATAIRLKPRDTKDTNYSMGAWAANNPKGIRAYLYSTNLQTNPYMYTSVNSLREVHQIGTVWATMLYDLMWALIEAHGGTYSANPVFRNGVPQDGRHLAMKLVMDGMALQPCNPNFVQARDAILDADRALTNSANKCTIWKAFAKRGLGYGAKYDARNRTGSNRLPPGC</sequence>
<feature type="signal peptide" evidence="2">
    <location>
        <begin position="1"/>
        <end position="18"/>
    </location>
</feature>
<feature type="propeptide" id="PRO_0000380848" evidence="1">
    <location>
        <begin position="19"/>
        <end position="246"/>
    </location>
</feature>
<feature type="chain" id="PRO_0000380849" description="Extracellular metalloproteinase 3">
    <location>
        <begin position="247"/>
        <end position="633"/>
    </location>
</feature>
<feature type="active site" evidence="3">
    <location>
        <position position="430"/>
    </location>
</feature>
<feature type="binding site" evidence="3">
    <location>
        <position position="429"/>
    </location>
    <ligand>
        <name>Zn(2+)</name>
        <dbReference type="ChEBI" id="CHEBI:29105"/>
        <note>catalytic</note>
    </ligand>
</feature>
<feature type="binding site" evidence="3">
    <location>
        <position position="433"/>
    </location>
    <ligand>
        <name>Zn(2+)</name>
        <dbReference type="ChEBI" id="CHEBI:29105"/>
        <note>catalytic</note>
    </ligand>
</feature>
<feature type="glycosylation site" description="N-linked (GlcNAc...) asparagine" evidence="2">
    <location>
        <position position="410"/>
    </location>
</feature>
<feature type="glycosylation site" description="N-linked (GlcNAc...) asparagine" evidence="2">
    <location>
        <position position="480"/>
    </location>
</feature>
<feature type="glycosylation site" description="N-linked (GlcNAc...) asparagine" evidence="2">
    <location>
        <position position="622"/>
    </location>
</feature>
<accession>Q6WIH3</accession>
<comment type="function">
    <text evidence="1">Secreted metalloproteinase probably acting as a virulence factor.</text>
</comment>
<comment type="cofactor">
    <cofactor evidence="1">
        <name>Zn(2+)</name>
        <dbReference type="ChEBI" id="CHEBI:29105"/>
    </cofactor>
    <text evidence="1">Binds 1 zinc ion per subunit.</text>
</comment>
<comment type="subcellular location">
    <subcellularLocation>
        <location evidence="4">Secreted</location>
    </subcellularLocation>
</comment>
<comment type="similarity">
    <text evidence="5">Belongs to the peptidase M36 family.</text>
</comment>
<proteinExistence type="evidence at protein level"/>
<name>MEP3_ARTBE</name>
<organism>
    <name type="scientific">Arthroderma benhamiae</name>
    <name type="common">Trichophyton mentagrophytes</name>
    <dbReference type="NCBI Taxonomy" id="63400"/>
    <lineage>
        <taxon>Eukaryota</taxon>
        <taxon>Fungi</taxon>
        <taxon>Dikarya</taxon>
        <taxon>Ascomycota</taxon>
        <taxon>Pezizomycotina</taxon>
        <taxon>Eurotiomycetes</taxon>
        <taxon>Eurotiomycetidae</taxon>
        <taxon>Onygenales</taxon>
        <taxon>Arthrodermataceae</taxon>
        <taxon>Trichophyton</taxon>
    </lineage>
</organism>